<keyword id="KW-0106">Calcium</keyword>
<keyword id="KW-0107">Calcium channel</keyword>
<keyword id="KW-0109">Calcium transport</keyword>
<keyword id="KW-1003">Cell membrane</keyword>
<keyword id="KW-0407">Ion channel</keyword>
<keyword id="KW-0406">Ion transport</keyword>
<keyword id="KW-0472">Membrane</keyword>
<keyword id="KW-1185">Reference proteome</keyword>
<keyword id="KW-1278">Translocase</keyword>
<keyword id="KW-0812">Transmembrane</keyword>
<keyword id="KW-1133">Transmembrane helix</keyword>
<keyword id="KW-0813">Transport</keyword>
<reference key="1">
    <citation type="journal article" date="2005" name="Nature">
        <title>Sequencing of Aspergillus nidulans and comparative analysis with A. fumigatus and A. oryzae.</title>
        <authorList>
            <person name="Galagan J.E."/>
            <person name="Calvo S.E."/>
            <person name="Cuomo C."/>
            <person name="Ma L.-J."/>
            <person name="Wortman J.R."/>
            <person name="Batzoglou S."/>
            <person name="Lee S.-I."/>
            <person name="Bastuerkmen M."/>
            <person name="Spevak C.C."/>
            <person name="Clutterbuck J."/>
            <person name="Kapitonov V."/>
            <person name="Jurka J."/>
            <person name="Scazzocchio C."/>
            <person name="Farman M.L."/>
            <person name="Butler J."/>
            <person name="Purcell S."/>
            <person name="Harris S."/>
            <person name="Braus G.H."/>
            <person name="Draht O."/>
            <person name="Busch S."/>
            <person name="D'Enfert C."/>
            <person name="Bouchier C."/>
            <person name="Goldman G.H."/>
            <person name="Bell-Pedersen D."/>
            <person name="Griffiths-Jones S."/>
            <person name="Doonan J.H."/>
            <person name="Yu J."/>
            <person name="Vienken K."/>
            <person name="Pain A."/>
            <person name="Freitag M."/>
            <person name="Selker E.U."/>
            <person name="Archer D.B."/>
            <person name="Penalva M.A."/>
            <person name="Oakley B.R."/>
            <person name="Momany M."/>
            <person name="Tanaka T."/>
            <person name="Kumagai T."/>
            <person name="Asai K."/>
            <person name="Machida M."/>
            <person name="Nierman W.C."/>
            <person name="Denning D.W."/>
            <person name="Caddick M.X."/>
            <person name="Hynes M."/>
            <person name="Paoletti M."/>
            <person name="Fischer R."/>
            <person name="Miller B.L."/>
            <person name="Dyer P.S."/>
            <person name="Sachs M.S."/>
            <person name="Osmani S.A."/>
            <person name="Birren B.W."/>
        </authorList>
    </citation>
    <scope>NUCLEOTIDE SEQUENCE [LARGE SCALE GENOMIC DNA]</scope>
    <source>
        <strain>FGSC A4 / ATCC 38163 / CBS 112.46 / NRRL 194 / M139</strain>
    </source>
</reference>
<reference key="2">
    <citation type="journal article" date="2009" name="Fungal Genet. Biol.">
        <title>The 2008 update of the Aspergillus nidulans genome annotation: a community effort.</title>
        <authorList>
            <person name="Wortman J.R."/>
            <person name="Gilsenan J.M."/>
            <person name="Joardar V."/>
            <person name="Deegan J."/>
            <person name="Clutterbuck J."/>
            <person name="Andersen M.R."/>
            <person name="Archer D."/>
            <person name="Bencina M."/>
            <person name="Braus G."/>
            <person name="Coutinho P."/>
            <person name="von Dohren H."/>
            <person name="Doonan J."/>
            <person name="Driessen A.J."/>
            <person name="Durek P."/>
            <person name="Espeso E."/>
            <person name="Fekete E."/>
            <person name="Flipphi M."/>
            <person name="Estrada C.G."/>
            <person name="Geysens S."/>
            <person name="Goldman G."/>
            <person name="de Groot P.W."/>
            <person name="Hansen K."/>
            <person name="Harris S.D."/>
            <person name="Heinekamp T."/>
            <person name="Helmstaedt K."/>
            <person name="Henrissat B."/>
            <person name="Hofmann G."/>
            <person name="Homan T."/>
            <person name="Horio T."/>
            <person name="Horiuchi H."/>
            <person name="James S."/>
            <person name="Jones M."/>
            <person name="Karaffa L."/>
            <person name="Karanyi Z."/>
            <person name="Kato M."/>
            <person name="Keller N."/>
            <person name="Kelly D.E."/>
            <person name="Kiel J.A."/>
            <person name="Kim J.M."/>
            <person name="van der Klei I.J."/>
            <person name="Klis F.M."/>
            <person name="Kovalchuk A."/>
            <person name="Krasevec N."/>
            <person name="Kubicek C.P."/>
            <person name="Liu B."/>
            <person name="Maccabe A."/>
            <person name="Meyer V."/>
            <person name="Mirabito P."/>
            <person name="Miskei M."/>
            <person name="Mos M."/>
            <person name="Mullins J."/>
            <person name="Nelson D.R."/>
            <person name="Nielsen J."/>
            <person name="Oakley B.R."/>
            <person name="Osmani S.A."/>
            <person name="Pakula T."/>
            <person name="Paszewski A."/>
            <person name="Paulsen I."/>
            <person name="Pilsyk S."/>
            <person name="Pocsi I."/>
            <person name="Punt P.J."/>
            <person name="Ram A.F."/>
            <person name="Ren Q."/>
            <person name="Robellet X."/>
            <person name="Robson G."/>
            <person name="Seiboth B."/>
            <person name="van Solingen P."/>
            <person name="Specht T."/>
            <person name="Sun J."/>
            <person name="Taheri-Talesh N."/>
            <person name="Takeshita N."/>
            <person name="Ussery D."/>
            <person name="vanKuyk P.A."/>
            <person name="Visser H."/>
            <person name="van de Vondervoort P.J."/>
            <person name="de Vries R.P."/>
            <person name="Walton J."/>
            <person name="Xiang X."/>
            <person name="Xiong Y."/>
            <person name="Zeng A.P."/>
            <person name="Brandt B.W."/>
            <person name="Cornell M.J."/>
            <person name="van den Hondel C.A."/>
            <person name="Visser J."/>
            <person name="Oliver S.G."/>
            <person name="Turner G."/>
        </authorList>
    </citation>
    <scope>GENOME REANNOTATION</scope>
    <source>
        <strain>FGSC A4 / ATCC 38163 / CBS 112.46 / NRRL 194 / M139</strain>
    </source>
</reference>
<reference key="3">
    <citation type="journal article" date="2022" name="Channels">
        <title>Genetic and cellular characterization of MscS-like putative channels in the filamentous fungus Aspergillus nidulans.</title>
        <authorList>
            <person name="Dionysopoulou M."/>
            <person name="Yan N."/>
            <person name="Wang B."/>
            <person name="Pliotas C."/>
            <person name="Diallinas G."/>
        </authorList>
    </citation>
    <scope>IDENTIFICATION</scope>
    <scope>FUNCTION</scope>
    <scope>DISRUPTION PHENOTYPE</scope>
    <scope>SUBCELLULAR LOCATION</scope>
</reference>
<accession>A0A1U8QVI3</accession>
<accession>C8V2U9</accession>
<accession>Q5B077</accession>
<name>MSCB_EMENI</name>
<gene>
    <name evidence="8" type="primary">mscB</name>
    <name type="ORF">AN6053.2</name>
    <name type="ORF">ANIA_06053</name>
</gene>
<organism>
    <name type="scientific">Emericella nidulans (strain FGSC A4 / ATCC 38163 / CBS 112.46 / NRRL 194 / M139)</name>
    <name type="common">Aspergillus nidulans</name>
    <dbReference type="NCBI Taxonomy" id="227321"/>
    <lineage>
        <taxon>Eukaryota</taxon>
        <taxon>Fungi</taxon>
        <taxon>Dikarya</taxon>
        <taxon>Ascomycota</taxon>
        <taxon>Pezizomycotina</taxon>
        <taxon>Eurotiomycetes</taxon>
        <taxon>Eurotiomycetidae</taxon>
        <taxon>Eurotiales</taxon>
        <taxon>Aspergillaceae</taxon>
        <taxon>Aspergillus</taxon>
        <taxon>Aspergillus subgen. Nidulantes</taxon>
    </lineage>
</organism>
<sequence length="943" mass="103476">MPNPNDVTIDIPLTSVSSRGQTGARNNSTNIPNSPSGGYSAGAEHNGGAEKGGLTSSPPSSSLGFGHRRRRTINDKTGLPAEEPEDGTVTRMGRFYQAVLNFSTVTRYLIYIAPLAALLAIPIIVGATAAEDAKIGGVSLPWFFCWVEVVWVSLWVCKLVAKVIPFVFQFVCGIVSAGTRKYALILRNLEIPITMVLWMIVSLVTFLPIMVYNPRNKREGDTETKSWEKSVKNVLFAFLVCALIFLGEKTLVQLISISYHRKQFDARIKESKRNINLIGILYDASRSMFPMYCKEFREDDAIISDSILLGGPETGRPGHSRSNSAAPLRFIRGVQQNVGRIGGKITGALGDVAHEITGKQVFNSSAARSIVSEALERRRSSEALARRIWMSFVIEGREALYLDDIMEVLGAGKEAEAEECFTMLDRDGNGDISLDEIILAISEIGRTRKTLNHSVHDVDQAIHVLDNLLATIAFIIAVLVFVSFVTSGFGTVIAAGATSLLSLSFVFATTAQEVLGSCIFLFVKHPFDIGDRVEIDSKPYIVQRISLLYSVFRNVNDNRVTQIPNVVLNTVWIDNYSRSSAMQEKLTIEVNIDTTTEEIQALKDEIETFVRSPDNKRDFHPDVDIEVSGVGALDKLELTVGLFHKSNWAIESVRAARRSKFMVALVAAVKKVPIRTPGAAAEDAAAADGDRPDDKPDDAEQPPARQSSISEGIRHPTVPDDSFPSDSKSTGVDLGRPGSVQRRGASATAATGNNSAGSAYSETTLNNTVSEPYQRSFTPNTGDRDTDHYHGSMSSPVTERHLGVSHDSIARKASTASTGRRRAGIMTTANQSLASPTTMQSESALPPHLQPPPPLQPSSSQYSQQYPQQQSQSPYSYTYSERYDQPESSLQPLEHTTSYNQSLPQVYEYAPAADRNSLEGHSPHVDPRHMTEEQRRNYESRRL</sequence>
<proteinExistence type="inferred from homology"/>
<comment type="function">
    <text evidence="1 6">Acts as a mechanosensitive calcium channel in response to membrane stretch (By similarity). Regulates intracellular calcium levels and cell volume for survival in response to hypo-osmotic shock (By similarity). Involved in maintaining vacuole integrity and protecting the nuclear envelope upon hypo-osmotic shock (By similarity). seems to contribute to CaCl2 toxicityIn contracstz to mscA, mscB seems to contribute to CaCl(2) toxicity (PubMed:35941834).</text>
</comment>
<comment type="catalytic activity">
    <reaction evidence="10">
        <text>Ca(2+)(in) = Ca(2+)(out)</text>
        <dbReference type="Rhea" id="RHEA:29671"/>
        <dbReference type="ChEBI" id="CHEBI:29108"/>
    </reaction>
</comment>
<comment type="subcellular location">
    <subcellularLocation>
        <location evidence="6">Cell membrane</location>
        <topology evidence="3">Multi-pass membrane protein</topology>
    </subcellularLocation>
</comment>
<comment type="domain">
    <text evidence="2">EF-hand domain is involved in the detection of calcium concentration.</text>
</comment>
<comment type="disruption phenotype">
    <text evidence="6">Does not affect growth, morphology and rate of germination of germlings under normal or hypotonic conditions.</text>
</comment>
<comment type="similarity">
    <text evidence="9">Belongs to the MscS (TC 1.A.23) family.</text>
</comment>
<dbReference type="EC" id="7.-.-.-" evidence="10"/>
<dbReference type="EMBL" id="AACD01000104">
    <property type="protein sequence ID" value="EAA58028.1"/>
    <property type="molecule type" value="Genomic_DNA"/>
</dbReference>
<dbReference type="EMBL" id="BN001301">
    <property type="protein sequence ID" value="CBF70280.1"/>
    <property type="molecule type" value="Genomic_DNA"/>
</dbReference>
<dbReference type="RefSeq" id="XP_663657.1">
    <property type="nucleotide sequence ID" value="XM_658565.1"/>
</dbReference>
<dbReference type="STRING" id="227321.Q5B077"/>
<dbReference type="TCDB" id="1.A.23.4.17">
    <property type="family name" value="the small conductance mechanosensitive ion channel (mscs) family"/>
</dbReference>
<dbReference type="EnsemblFungi" id="CBF70280">
    <property type="protein sequence ID" value="CBF70280"/>
    <property type="gene ID" value="ANIA_06053"/>
</dbReference>
<dbReference type="GeneID" id="2871015"/>
<dbReference type="KEGG" id="ani:ANIA_06053"/>
<dbReference type="eggNOG" id="KOG4629">
    <property type="taxonomic scope" value="Eukaryota"/>
</dbReference>
<dbReference type="HOGENOM" id="CLU_010480_0_0_1"/>
<dbReference type="OMA" id="HSMHDVD"/>
<dbReference type="OrthoDB" id="544685at2759"/>
<dbReference type="Proteomes" id="UP000000560">
    <property type="component" value="Chromosome I"/>
</dbReference>
<dbReference type="GO" id="GO:0005886">
    <property type="term" value="C:plasma membrane"/>
    <property type="evidence" value="ECO:0007669"/>
    <property type="project" value="UniProtKB-SubCell"/>
</dbReference>
<dbReference type="GO" id="GO:0005262">
    <property type="term" value="F:calcium channel activity"/>
    <property type="evidence" value="ECO:0000318"/>
    <property type="project" value="GO_Central"/>
</dbReference>
<dbReference type="GO" id="GO:0005509">
    <property type="term" value="F:calcium ion binding"/>
    <property type="evidence" value="ECO:0007669"/>
    <property type="project" value="InterPro"/>
</dbReference>
<dbReference type="GO" id="GO:0070588">
    <property type="term" value="P:calcium ion transmembrane transport"/>
    <property type="evidence" value="ECO:0000318"/>
    <property type="project" value="GO_Central"/>
</dbReference>
<dbReference type="GO" id="GO:0006874">
    <property type="term" value="P:intracellular calcium ion homeostasis"/>
    <property type="evidence" value="ECO:0000318"/>
    <property type="project" value="GO_Central"/>
</dbReference>
<dbReference type="FunFam" id="1.10.238.10:FF:000345">
    <property type="entry name" value="Mechanosensitive ion channel protein"/>
    <property type="match status" value="1"/>
</dbReference>
<dbReference type="Gene3D" id="2.30.30.60">
    <property type="match status" value="1"/>
</dbReference>
<dbReference type="Gene3D" id="1.10.238.10">
    <property type="entry name" value="EF-hand"/>
    <property type="match status" value="1"/>
</dbReference>
<dbReference type="InterPro" id="IPR011992">
    <property type="entry name" value="EF-hand-dom_pair"/>
</dbReference>
<dbReference type="InterPro" id="IPR018247">
    <property type="entry name" value="EF_Hand_1_Ca_BS"/>
</dbReference>
<dbReference type="InterPro" id="IPR002048">
    <property type="entry name" value="EF_hand_dom"/>
</dbReference>
<dbReference type="InterPro" id="IPR010920">
    <property type="entry name" value="LSM_dom_sf"/>
</dbReference>
<dbReference type="InterPro" id="IPR016688">
    <property type="entry name" value="MscS-like_plants/fungi"/>
</dbReference>
<dbReference type="InterPro" id="IPR023408">
    <property type="entry name" value="MscS_beta-dom_sf"/>
</dbReference>
<dbReference type="InterPro" id="IPR006685">
    <property type="entry name" value="MscS_channel_2nd"/>
</dbReference>
<dbReference type="PANTHER" id="PTHR31323">
    <property type="entry name" value="MECHANOSENSITIVE ION CHANNEL PROTEIN MSY2"/>
    <property type="match status" value="1"/>
</dbReference>
<dbReference type="PANTHER" id="PTHR31323:SF14">
    <property type="entry name" value="MECHANOSENSITIVE ION CHANNEL PROTEIN MSY2"/>
    <property type="match status" value="1"/>
</dbReference>
<dbReference type="Pfam" id="PF00924">
    <property type="entry name" value="MS_channel_2nd"/>
    <property type="match status" value="1"/>
</dbReference>
<dbReference type="PIRSF" id="PIRSF017209">
    <property type="entry name" value="Memb_At2g17000_prd"/>
    <property type="match status" value="1"/>
</dbReference>
<dbReference type="SMART" id="SM00054">
    <property type="entry name" value="EFh"/>
    <property type="match status" value="1"/>
</dbReference>
<dbReference type="SUPFAM" id="SSF47473">
    <property type="entry name" value="EF-hand"/>
    <property type="match status" value="1"/>
</dbReference>
<dbReference type="SUPFAM" id="SSF50182">
    <property type="entry name" value="Sm-like ribonucleoproteins"/>
    <property type="match status" value="1"/>
</dbReference>
<dbReference type="PROSITE" id="PS00018">
    <property type="entry name" value="EF_HAND_1"/>
    <property type="match status" value="1"/>
</dbReference>
<dbReference type="PROSITE" id="PS50222">
    <property type="entry name" value="EF_HAND_2"/>
    <property type="match status" value="1"/>
</dbReference>
<evidence type="ECO:0000250" key="1">
    <source>
        <dbReference type="UniProtKB" id="O14050"/>
    </source>
</evidence>
<evidence type="ECO:0000250" key="2">
    <source>
        <dbReference type="UniProtKB" id="O74839"/>
    </source>
</evidence>
<evidence type="ECO:0000255" key="3"/>
<evidence type="ECO:0000255" key="4">
    <source>
        <dbReference type="PROSITE-ProRule" id="PRU00448"/>
    </source>
</evidence>
<evidence type="ECO:0000256" key="5">
    <source>
        <dbReference type="SAM" id="MobiDB-lite"/>
    </source>
</evidence>
<evidence type="ECO:0000269" key="6">
    <source>
    </source>
</evidence>
<evidence type="ECO:0000303" key="7">
    <source>
    </source>
</evidence>
<evidence type="ECO:0000303" key="8">
    <source>
    </source>
</evidence>
<evidence type="ECO:0000305" key="9"/>
<evidence type="ECO:0000305" key="10">
    <source>
    </source>
</evidence>
<protein>
    <recommendedName>
        <fullName evidence="7">Mechanosensitive ion channel protein BA</fullName>
        <ecNumber evidence="10">7.-.-.-</ecNumber>
    </recommendedName>
</protein>
<feature type="chain" id="PRO_0000457336" description="Mechanosensitive ion channel protein BA">
    <location>
        <begin position="1"/>
        <end position="943"/>
    </location>
</feature>
<feature type="topological domain" description="Cytoplasmic" evidence="10">
    <location>
        <begin position="1"/>
        <end position="107"/>
    </location>
</feature>
<feature type="transmembrane region" description="Helical" evidence="3">
    <location>
        <begin position="108"/>
        <end position="130"/>
    </location>
</feature>
<feature type="topological domain" description="Lumenal" evidence="10">
    <location>
        <begin position="131"/>
        <end position="149"/>
    </location>
</feature>
<feature type="transmembrane region" description="Helical" evidence="3">
    <location>
        <begin position="150"/>
        <end position="175"/>
    </location>
</feature>
<feature type="topological domain" description="Cytoplasmic" evidence="10">
    <location>
        <begin position="176"/>
        <end position="195"/>
    </location>
</feature>
<feature type="transmembrane region" description="Helical" evidence="3">
    <location>
        <begin position="196"/>
        <end position="214"/>
    </location>
</feature>
<feature type="topological domain" description="Lumenal" evidence="10">
    <location>
        <begin position="215"/>
        <end position="233"/>
    </location>
</feature>
<feature type="transmembrane region" description="Helical" evidence="3">
    <location>
        <begin position="234"/>
        <end position="259"/>
    </location>
</feature>
<feature type="topological domain" description="Cytoplasmic" evidence="10">
    <location>
        <begin position="260"/>
        <end position="468"/>
    </location>
</feature>
<feature type="transmembrane region" description="Helical" evidence="3">
    <location>
        <begin position="469"/>
        <end position="489"/>
    </location>
</feature>
<feature type="topological domain" description="Lumenal" evidence="10">
    <location>
        <begin position="490"/>
        <end position="502"/>
    </location>
</feature>
<feature type="transmembrane region" description="Helical" evidence="3">
    <location>
        <begin position="503"/>
        <end position="523"/>
    </location>
</feature>
<feature type="topological domain" description="Cytoplasmic" evidence="10">
    <location>
        <begin position="524"/>
        <end position="943"/>
    </location>
</feature>
<feature type="domain" description="EF-hand" evidence="4">
    <location>
        <begin position="412"/>
        <end position="447"/>
    </location>
</feature>
<feature type="region of interest" description="Disordered" evidence="5">
    <location>
        <begin position="1"/>
        <end position="67"/>
    </location>
</feature>
<feature type="region of interest" description="Disordered" evidence="5">
    <location>
        <begin position="677"/>
        <end position="943"/>
    </location>
</feature>
<feature type="compositionally biased region" description="Polar residues" evidence="5">
    <location>
        <begin position="14"/>
        <end position="37"/>
    </location>
</feature>
<feature type="compositionally biased region" description="Low complexity" evidence="5">
    <location>
        <begin position="678"/>
        <end position="687"/>
    </location>
</feature>
<feature type="compositionally biased region" description="Low complexity" evidence="5">
    <location>
        <begin position="744"/>
        <end position="759"/>
    </location>
</feature>
<feature type="compositionally biased region" description="Polar residues" evidence="5">
    <location>
        <begin position="760"/>
        <end position="781"/>
    </location>
</feature>
<feature type="compositionally biased region" description="Basic and acidic residues" evidence="5">
    <location>
        <begin position="798"/>
        <end position="810"/>
    </location>
</feature>
<feature type="compositionally biased region" description="Polar residues" evidence="5">
    <location>
        <begin position="827"/>
        <end position="842"/>
    </location>
</feature>
<feature type="compositionally biased region" description="Low complexity" evidence="5">
    <location>
        <begin position="857"/>
        <end position="880"/>
    </location>
</feature>
<feature type="compositionally biased region" description="Polar residues" evidence="5">
    <location>
        <begin position="886"/>
        <end position="904"/>
    </location>
</feature>
<feature type="compositionally biased region" description="Basic and acidic residues" evidence="5">
    <location>
        <begin position="916"/>
        <end position="943"/>
    </location>
</feature>
<feature type="binding site" evidence="4">
    <location>
        <position position="425"/>
    </location>
    <ligand>
        <name>Ca(2+)</name>
        <dbReference type="ChEBI" id="CHEBI:29108"/>
    </ligand>
</feature>
<feature type="binding site" evidence="4">
    <location>
        <position position="427"/>
    </location>
    <ligand>
        <name>Ca(2+)</name>
        <dbReference type="ChEBI" id="CHEBI:29108"/>
    </ligand>
</feature>
<feature type="binding site" evidence="4">
    <location>
        <position position="429"/>
    </location>
    <ligand>
        <name>Ca(2+)</name>
        <dbReference type="ChEBI" id="CHEBI:29108"/>
    </ligand>
</feature>
<feature type="binding site" evidence="4">
    <location>
        <position position="431"/>
    </location>
    <ligand>
        <name>Ca(2+)</name>
        <dbReference type="ChEBI" id="CHEBI:29108"/>
    </ligand>
</feature>
<feature type="binding site" evidence="4">
    <location>
        <position position="436"/>
    </location>
    <ligand>
        <name>Ca(2+)</name>
        <dbReference type="ChEBI" id="CHEBI:29108"/>
    </ligand>
</feature>